<keyword id="KW-0002">3D-structure</keyword>
<keyword id="KW-0007">Acetylation</keyword>
<keyword id="KW-0903">Direct protein sequencing</keyword>
<keyword id="KW-0325">Glycoprotein</keyword>
<keyword id="KW-0496">Mitochondrion</keyword>
<keyword id="KW-0597">Phosphoprotein</keyword>
<keyword id="KW-1185">Reference proteome</keyword>
<keyword id="KW-0677">Repeat</keyword>
<keyword id="KW-0694">RNA-binding</keyword>
<keyword id="KW-0808">Transferase</keyword>
<name>THTR_BOVIN</name>
<dbReference type="EC" id="2.8.1.1" evidence="9"/>
<dbReference type="EMBL" id="M58561">
    <property type="protein sequence ID" value="AAA30753.1"/>
    <property type="molecule type" value="mRNA"/>
</dbReference>
<dbReference type="EMBL" id="BT020995">
    <property type="protein sequence ID" value="AAX09012.1"/>
    <property type="molecule type" value="mRNA"/>
</dbReference>
<dbReference type="EMBL" id="BC112580">
    <property type="protein sequence ID" value="AAI12581.1"/>
    <property type="molecule type" value="mRNA"/>
</dbReference>
<dbReference type="PIR" id="A23704">
    <property type="entry name" value="ROBO"/>
</dbReference>
<dbReference type="RefSeq" id="NP_803455.1">
    <property type="nucleotide sequence ID" value="NM_177489.3"/>
</dbReference>
<dbReference type="RefSeq" id="XP_010803625.3">
    <property type="nucleotide sequence ID" value="XM_010805323.4"/>
</dbReference>
<dbReference type="PDB" id="1BOH">
    <property type="method" value="X-ray"/>
    <property type="resolution" value="2.30 A"/>
    <property type="chains" value="A=2-297"/>
</dbReference>
<dbReference type="PDB" id="1BOI">
    <property type="method" value="X-ray"/>
    <property type="resolution" value="2.20 A"/>
    <property type="chains" value="A=2-297"/>
</dbReference>
<dbReference type="PDB" id="1DP2">
    <property type="method" value="X-ray"/>
    <property type="resolution" value="2.01 A"/>
    <property type="chains" value="A=2-294"/>
</dbReference>
<dbReference type="PDB" id="1ORB">
    <property type="method" value="X-ray"/>
    <property type="resolution" value="2.00 A"/>
    <property type="chains" value="A=2-297"/>
</dbReference>
<dbReference type="PDB" id="1RHD">
    <property type="method" value="X-ray"/>
    <property type="resolution" value="2.50 A"/>
    <property type="chains" value="A=2-294"/>
</dbReference>
<dbReference type="PDB" id="1RHS">
    <property type="method" value="X-ray"/>
    <property type="resolution" value="1.36 A"/>
    <property type="chains" value="A=2-297"/>
</dbReference>
<dbReference type="PDB" id="2ORA">
    <property type="method" value="X-ray"/>
    <property type="resolution" value="1.99 A"/>
    <property type="chains" value="A=2-297"/>
</dbReference>
<dbReference type="PDB" id="8Q5Z">
    <property type="method" value="X-ray"/>
    <property type="resolution" value="1.50 A"/>
    <property type="chains" value="A=1-297"/>
</dbReference>
<dbReference type="PDBsum" id="1BOH"/>
<dbReference type="PDBsum" id="1BOI"/>
<dbReference type="PDBsum" id="1DP2"/>
<dbReference type="PDBsum" id="1ORB"/>
<dbReference type="PDBsum" id="1RHD"/>
<dbReference type="PDBsum" id="1RHS"/>
<dbReference type="PDBsum" id="2ORA"/>
<dbReference type="PDBsum" id="8Q5Z"/>
<dbReference type="PCDDB" id="P00586"/>
<dbReference type="SMR" id="P00586"/>
<dbReference type="FunCoup" id="P00586">
    <property type="interactions" value="1844"/>
</dbReference>
<dbReference type="IntAct" id="P00586">
    <property type="interactions" value="2"/>
</dbReference>
<dbReference type="MINT" id="P00586"/>
<dbReference type="STRING" id="9913.ENSBTAP00000040894"/>
<dbReference type="GlyCosmos" id="P00586">
    <property type="glycosylation" value="1 site, No reported glycans"/>
</dbReference>
<dbReference type="GlyGen" id="P00586">
    <property type="glycosylation" value="2 sites, 1 O-linked glycan (1 site)"/>
</dbReference>
<dbReference type="PaxDb" id="9913-ENSBTAP00000040894"/>
<dbReference type="PeptideAtlas" id="P00586"/>
<dbReference type="GeneID" id="280946"/>
<dbReference type="KEGG" id="bta:280946"/>
<dbReference type="CTD" id="7263"/>
<dbReference type="eggNOG" id="KOG1529">
    <property type="taxonomic scope" value="Eukaryota"/>
</dbReference>
<dbReference type="HOGENOM" id="CLU_031618_3_1_1"/>
<dbReference type="InParanoid" id="P00586"/>
<dbReference type="OrthoDB" id="270167at2759"/>
<dbReference type="TreeFam" id="TF315133"/>
<dbReference type="BRENDA" id="2.8.1.1">
    <property type="organism ID" value="908"/>
</dbReference>
<dbReference type="EvolutionaryTrace" id="P00586"/>
<dbReference type="Proteomes" id="UP000009136">
    <property type="component" value="Unplaced"/>
</dbReference>
<dbReference type="GO" id="GO:0005759">
    <property type="term" value="C:mitochondrial matrix"/>
    <property type="evidence" value="ECO:0007669"/>
    <property type="project" value="UniProtKB-SubCell"/>
</dbReference>
<dbReference type="GO" id="GO:0005739">
    <property type="term" value="C:mitochondrion"/>
    <property type="evidence" value="ECO:0000318"/>
    <property type="project" value="GO_Central"/>
</dbReference>
<dbReference type="GO" id="GO:0016784">
    <property type="term" value="F:3-mercaptopyruvate sulfurtransferase activity"/>
    <property type="evidence" value="ECO:0000318"/>
    <property type="project" value="GO_Central"/>
</dbReference>
<dbReference type="GO" id="GO:0008097">
    <property type="term" value="F:5S rRNA binding"/>
    <property type="evidence" value="ECO:0000250"/>
    <property type="project" value="UniProtKB"/>
</dbReference>
<dbReference type="GO" id="GO:0004792">
    <property type="term" value="F:thiosulfate-cyanide sulfurtransferase activity"/>
    <property type="evidence" value="ECO:0000318"/>
    <property type="project" value="GO_Central"/>
</dbReference>
<dbReference type="GO" id="GO:0035928">
    <property type="term" value="P:rRNA import into mitochondrion"/>
    <property type="evidence" value="ECO:0000250"/>
    <property type="project" value="UniProtKB"/>
</dbReference>
<dbReference type="GO" id="GO:0051029">
    <property type="term" value="P:rRNA transport"/>
    <property type="evidence" value="ECO:0000250"/>
    <property type="project" value="UniProtKB"/>
</dbReference>
<dbReference type="CDD" id="cd01445">
    <property type="entry name" value="TST_Repeats"/>
    <property type="match status" value="2"/>
</dbReference>
<dbReference type="FunFam" id="3.40.250.10:FF:000001">
    <property type="entry name" value="Sulfurtransferase"/>
    <property type="match status" value="1"/>
</dbReference>
<dbReference type="FunFam" id="3.40.250.10:FF:000008">
    <property type="entry name" value="Sulfurtransferase"/>
    <property type="match status" value="1"/>
</dbReference>
<dbReference type="Gene3D" id="3.40.250.10">
    <property type="entry name" value="Rhodanese-like domain"/>
    <property type="match status" value="2"/>
</dbReference>
<dbReference type="InterPro" id="IPR001763">
    <property type="entry name" value="Rhodanese-like_dom"/>
</dbReference>
<dbReference type="InterPro" id="IPR036873">
    <property type="entry name" value="Rhodanese-like_dom_sf"/>
</dbReference>
<dbReference type="InterPro" id="IPR001307">
    <property type="entry name" value="Thiosulphate_STrfase_CS"/>
</dbReference>
<dbReference type="InterPro" id="IPR045078">
    <property type="entry name" value="TST/MPST-like"/>
</dbReference>
<dbReference type="PANTHER" id="PTHR11364">
    <property type="entry name" value="THIOSULFATE SULFERTANSFERASE"/>
    <property type="match status" value="1"/>
</dbReference>
<dbReference type="PANTHER" id="PTHR11364:SF6">
    <property type="entry name" value="THIOSULFATE SULFURTRANSFERASE"/>
    <property type="match status" value="1"/>
</dbReference>
<dbReference type="Pfam" id="PF00581">
    <property type="entry name" value="Rhodanese"/>
    <property type="match status" value="2"/>
</dbReference>
<dbReference type="SMART" id="SM00450">
    <property type="entry name" value="RHOD"/>
    <property type="match status" value="2"/>
</dbReference>
<dbReference type="SUPFAM" id="SSF52821">
    <property type="entry name" value="Rhodanese/Cell cycle control phosphatase"/>
    <property type="match status" value="2"/>
</dbReference>
<dbReference type="PROSITE" id="PS00380">
    <property type="entry name" value="RHODANESE_1"/>
    <property type="match status" value="1"/>
</dbReference>
<dbReference type="PROSITE" id="PS00683">
    <property type="entry name" value="RHODANESE_2"/>
    <property type="match status" value="1"/>
</dbReference>
<dbReference type="PROSITE" id="PS50206">
    <property type="entry name" value="RHODANESE_3"/>
    <property type="match status" value="2"/>
</dbReference>
<gene>
    <name type="primary">TST</name>
</gene>
<reference key="1">
    <citation type="journal article" date="1991" name="J. Biol. Chem.">
        <title>Expression of cloned bovine adrenal rhodanese.</title>
        <authorList>
            <person name="Miller D.M."/>
            <person name="Delgado R."/>
            <person name="Chirgwin J.M."/>
            <person name="Hardies S.C."/>
            <person name="Horowitz P.M."/>
        </authorList>
    </citation>
    <scope>NUCLEOTIDE SEQUENCE [MRNA]</scope>
</reference>
<reference key="2">
    <citation type="journal article" date="2005" name="BMC Genomics">
        <title>Characterization of 954 bovine full-CDS cDNA sequences.</title>
        <authorList>
            <person name="Harhay G.P."/>
            <person name="Sonstegard T.S."/>
            <person name="Keele J.W."/>
            <person name="Heaton M.P."/>
            <person name="Clawson M.L."/>
            <person name="Snelling W.M."/>
            <person name="Wiedmann R.T."/>
            <person name="Van Tassell C.P."/>
            <person name="Smith T.P.L."/>
        </authorList>
    </citation>
    <scope>NUCLEOTIDE SEQUENCE [LARGE SCALE MRNA]</scope>
</reference>
<reference key="3">
    <citation type="submission" date="2006-01" db="EMBL/GenBank/DDBJ databases">
        <authorList>
            <consortium name="NIH - Mammalian Gene Collection (MGC) project"/>
        </authorList>
    </citation>
    <scope>NUCLEOTIDE SEQUENCE [LARGE SCALE MRNA]</scope>
    <source>
        <strain>Hereford</strain>
        <tissue>Testis</tissue>
    </source>
</reference>
<reference key="4">
    <citation type="journal article" date="1978" name="J. Biol. Chem.">
        <title>The covalent structure of bovine liver rhodanese. Isolation and partial structural analysis of cyanogen bromide fragements and the complete sequence of the enzyme.</title>
        <authorList>
            <person name="Russell J."/>
            <person name="Weng L."/>
            <person name="Keim P.S."/>
            <person name="Heinrikson R.L."/>
        </authorList>
    </citation>
    <scope>PROTEIN SEQUENCE OF 2-295</scope>
    <source>
        <tissue>Liver</tissue>
    </source>
</reference>
<reference key="5">
    <citation type="journal article" date="1978" name="J. Biol. Chem.">
        <title>Active site cysteinyl and arginyl residues of rhodanese. A novel formation of disulfide bonds in the active site promoted by phenylglyoxal.</title>
        <authorList>
            <person name="Weng L."/>
            <person name="Heinrikson R.L."/>
            <person name="Westley J."/>
        </authorList>
    </citation>
    <scope>CATALYTIC ACTIVITY</scope>
    <scope>ACTIVE SITE</scope>
</reference>
<reference key="6">
    <citation type="journal article" date="1994" name="J. Biol. Chem.">
        <title>The sulfurtransferase activity and structure of rhodanese are affected by site-directed replacement of Arg-186 or Lys-249.</title>
        <authorList>
            <person name="Luo G.-X."/>
            <person name="Horowitz P.M."/>
        </authorList>
    </citation>
    <scope>MUTAGENESIS OF ARG-187 AND LYS-250</scope>
</reference>
<reference key="7">
    <citation type="journal article" date="2011" name="Science">
        <title>Sirt5 is a NAD-dependent protein lysine demalonylase and desuccinylase.</title>
        <authorList>
            <person name="Du J."/>
            <person name="Zhou Y."/>
            <person name="Su X."/>
            <person name="Yu J.J."/>
            <person name="Khan S."/>
            <person name="Jiang H."/>
            <person name="Kim J."/>
            <person name="Woo J."/>
            <person name="Kim J.H."/>
            <person name="Choi B.H."/>
            <person name="He B."/>
            <person name="Chen W."/>
            <person name="Zhang S."/>
            <person name="Cerione R.A."/>
            <person name="Auwerx J."/>
            <person name="Hao Q."/>
            <person name="Lin H."/>
        </authorList>
    </citation>
    <scope>SUCCINYLATION AT LYS-14</scope>
</reference>
<reference key="8">
    <citation type="journal article" date="1978" name="J. Mol. Biol.">
        <title>Structure of bovine liver rhodanese. I. Structure determination at 2.5-A resolution and a comparison of the conformation and sequence of its two domains.</title>
        <authorList>
            <person name="Ploegman J.H."/>
            <person name="Drent G."/>
            <person name="Kalk K.H."/>
            <person name="Hol W.G.J."/>
        </authorList>
    </citation>
    <scope>X-RAY CRYSTALLOGRAPHY (2.5 ANGSTROMS)</scope>
</reference>
<reference key="9">
    <citation type="journal article" date="1983" name="Biochemistry">
        <title>Binding of metal cyanide complexes to bovine liver rhodanese in the crystalline state.</title>
        <authorList>
            <person name="Lijk L.J."/>
            <person name="Kalk K.H."/>
            <person name="Brandenburg N.P."/>
            <person name="Hol W.G.J."/>
        </authorList>
    </citation>
    <scope>X-RAY CRYSTALLOGRAPHY (2.5 ANGSTROMS)</scope>
</reference>
<reference key="10">
    <citation type="journal article" date="1996" name="J. Biol. Chem.">
        <title>Active site structural features for chemically modified forms of rhodanese.</title>
        <authorList>
            <person name="Gliubich F."/>
            <person name="Gazerro M."/>
            <person name="Zanotti G."/>
            <person name="Delbono S."/>
            <person name="Bombieri G."/>
            <person name="Berni R."/>
        </authorList>
    </citation>
    <scope>X-RAY CRYSTALLOGRAPHY (1.36 ANGSTROMS)</scope>
</reference>
<reference key="11">
    <citation type="journal article" date="1998" name="Acta Crystallogr. D">
        <title>Structure of sulfur-substituted rhodanese at 1.36-A resolution.</title>
        <authorList>
            <person name="Gliubich F."/>
            <person name="Berni R."/>
            <person name="Colapietro M."/>
            <person name="Barba L."/>
            <person name="Zanotti G."/>
        </authorList>
    </citation>
    <scope>X-RAY CRYSTALLOGRAPHY (1.36 ANGSTROMS)</scope>
</reference>
<sequence>MVHQVLYRALVSTKWLAESVRAGKVGPGLRVLDASWYSPGTREARKEYLERHVPGASFFDIEECRDKASPYEVMLPSEAGFADYVGSLGISNDTHVVVYDGDDLGSFYAPRVWWMFRVFGHRTVSVLNGGFRNWLKEGHPVTSEPSRPEPAIFKATLNRSLLKTYEQVLENLESKRFQLVDSRAQGRYLGTQPEPDAVGLDSGHIRGSVNMPFMNFLTEDGFEKSPEELRAMFEAKKVDLTKPLIATCRKGVTACHIALAAYLCGKPDVAIYDGSWFEWFHRAPPETWVSQGKGGKA</sequence>
<protein>
    <recommendedName>
        <fullName>Thiosulfate sulfurtransferase</fullName>
        <ecNumber evidence="9">2.8.1.1</ecNumber>
    </recommendedName>
    <alternativeName>
        <fullName>Rhodanese</fullName>
    </alternativeName>
</protein>
<feature type="initiator methionine" description="Removed" evidence="8">
    <location>
        <position position="1"/>
    </location>
</feature>
<feature type="chain" id="PRO_0000139392" description="Thiosulfate sulfurtransferase">
    <location>
        <begin position="2"/>
        <end position="297"/>
    </location>
</feature>
<feature type="domain" description="Rhodanese 1" evidence="5">
    <location>
        <begin position="25"/>
        <end position="143"/>
    </location>
</feature>
<feature type="domain" description="Rhodanese 2" evidence="5">
    <location>
        <begin position="173"/>
        <end position="288"/>
    </location>
</feature>
<feature type="region of interest" description="Hinge">
    <location>
        <begin position="144"/>
        <end position="159"/>
    </location>
</feature>
<feature type="active site" description="Cysteine persulfide intermediate" evidence="5 9">
    <location>
        <position position="248"/>
    </location>
</feature>
<feature type="binding site">
    <location>
        <position position="187"/>
    </location>
    <ligand>
        <name>substrate</name>
    </ligand>
</feature>
<feature type="binding site">
    <location>
        <position position="250"/>
    </location>
    <ligand>
        <name>substrate</name>
    </ligand>
</feature>
<feature type="modified residue" description="N6-acetyllysine; alternate" evidence="4">
    <location>
        <position position="14"/>
    </location>
</feature>
<feature type="modified residue" description="N6-succinyllysine; alternate" evidence="6">
    <location>
        <position position="14"/>
    </location>
</feature>
<feature type="modified residue" description="Phosphoserine" evidence="2">
    <location>
        <position position="38"/>
    </location>
</feature>
<feature type="modified residue" description="N6-acetyllysine; alternate" evidence="3">
    <location>
        <position position="136"/>
    </location>
</feature>
<feature type="modified residue" description="N6-succinyllysine; alternate" evidence="3">
    <location>
        <position position="136"/>
    </location>
</feature>
<feature type="modified residue" description="N6-acetyllysine" evidence="3">
    <location>
        <position position="163"/>
    </location>
</feature>
<feature type="modified residue" description="N6-acetyllysine; alternate" evidence="3">
    <location>
        <position position="175"/>
    </location>
</feature>
<feature type="modified residue" description="N6-succinyllysine; alternate" evidence="3">
    <location>
        <position position="175"/>
    </location>
</feature>
<feature type="modified residue" description="N6-acetyllysine; alternate" evidence="3">
    <location>
        <position position="224"/>
    </location>
</feature>
<feature type="modified residue" description="N6-succinyllysine; alternate" evidence="3">
    <location>
        <position position="224"/>
    </location>
</feature>
<feature type="modified residue" description="N6-acetyllysine" evidence="3">
    <location>
        <position position="236"/>
    </location>
</feature>
<feature type="modified residue" description="N6-acetyllysine; alternate" evidence="3">
    <location>
        <position position="237"/>
    </location>
</feature>
<feature type="modified residue" description="N6-succinyllysine; alternate" evidence="3">
    <location>
        <position position="237"/>
    </location>
</feature>
<feature type="glycosylation site" description="O-linked (GlcNAc) serine" evidence="1">
    <location>
        <position position="35"/>
    </location>
</feature>
<feature type="sequence variant" description="In some preparations, has no effect on enzyme activity.">
    <location>
        <begin position="2"/>
        <end position="3"/>
    </location>
</feature>
<feature type="mutagenesis site" description="Reduced rhodanese activity." evidence="10">
    <original>R</original>
    <variation>L</variation>
    <location>
        <position position="187"/>
    </location>
</feature>
<feature type="mutagenesis site" description="No rhodanese activity." evidence="10">
    <original>K</original>
    <variation>A</variation>
    <location>
        <position position="250"/>
    </location>
</feature>
<feature type="sequence conflict" description="In Ref. 4; AA sequence." evidence="11" ref="4">
    <original>D</original>
    <variation>N</variation>
    <location>
        <position position="100"/>
    </location>
</feature>
<feature type="sequence conflict" description="In Ref. 4; AA sequence." evidence="11" ref="4">
    <original>N</original>
    <variation>D</variation>
    <location>
        <position position="215"/>
    </location>
</feature>
<feature type="sequence conflict" description="In Ref. 4; AA sequence." evidence="11" ref="4">
    <original>D</original>
    <variation>N</variation>
    <location>
        <position position="220"/>
    </location>
</feature>
<feature type="turn" evidence="12">
    <location>
        <begin position="3"/>
        <end position="6"/>
    </location>
</feature>
<feature type="strand" evidence="15">
    <location>
        <begin position="9"/>
        <end position="11"/>
    </location>
</feature>
<feature type="helix" evidence="15">
    <location>
        <begin position="13"/>
        <end position="21"/>
    </location>
</feature>
<feature type="turn" evidence="14">
    <location>
        <begin position="26"/>
        <end position="28"/>
    </location>
</feature>
<feature type="strand" evidence="15">
    <location>
        <begin position="29"/>
        <end position="33"/>
    </location>
</feature>
<feature type="turn" evidence="13">
    <location>
        <begin position="39"/>
        <end position="41"/>
    </location>
</feature>
<feature type="helix" evidence="15">
    <location>
        <begin position="44"/>
        <end position="50"/>
    </location>
</feature>
<feature type="strand" evidence="12">
    <location>
        <begin position="56"/>
        <end position="58"/>
    </location>
</feature>
<feature type="turn" evidence="15">
    <location>
        <begin position="61"/>
        <end position="63"/>
    </location>
</feature>
<feature type="strand" evidence="15">
    <location>
        <begin position="69"/>
        <end position="73"/>
    </location>
</feature>
<feature type="helix" evidence="15">
    <location>
        <begin position="78"/>
        <end position="87"/>
    </location>
</feature>
<feature type="strand" evidence="15">
    <location>
        <begin position="95"/>
        <end position="99"/>
    </location>
</feature>
<feature type="strand" evidence="15">
    <location>
        <begin position="103"/>
        <end position="105"/>
    </location>
</feature>
<feature type="helix" evidence="15">
    <location>
        <begin position="109"/>
        <end position="118"/>
    </location>
</feature>
<feature type="strand" evidence="15">
    <location>
        <begin position="124"/>
        <end position="127"/>
    </location>
</feature>
<feature type="helix" evidence="15">
    <location>
        <begin position="130"/>
        <end position="136"/>
    </location>
</feature>
<feature type="helix" evidence="15">
    <location>
        <begin position="159"/>
        <end position="161"/>
    </location>
</feature>
<feature type="helix" evidence="15">
    <location>
        <begin position="165"/>
        <end position="174"/>
    </location>
</feature>
<feature type="strand" evidence="15">
    <location>
        <begin position="177"/>
        <end position="181"/>
    </location>
</feature>
<feature type="helix" evidence="15">
    <location>
        <begin position="185"/>
        <end position="189"/>
    </location>
</feature>
<feature type="strand" evidence="16">
    <location>
        <begin position="190"/>
        <end position="192"/>
    </location>
</feature>
<feature type="strand" evidence="15">
    <location>
        <begin position="195"/>
        <end position="199"/>
    </location>
</feature>
<feature type="strand" evidence="13">
    <location>
        <begin position="208"/>
        <end position="210"/>
    </location>
</feature>
<feature type="helix" evidence="15">
    <location>
        <begin position="213"/>
        <end position="216"/>
    </location>
</feature>
<feature type="helix" evidence="15">
    <location>
        <begin position="226"/>
        <end position="235"/>
    </location>
</feature>
<feature type="strand" evidence="15">
    <location>
        <begin position="244"/>
        <end position="247"/>
    </location>
</feature>
<feature type="strand" evidence="15">
    <location>
        <begin position="249"/>
        <end position="252"/>
    </location>
</feature>
<feature type="helix" evidence="15">
    <location>
        <begin position="254"/>
        <end position="263"/>
    </location>
</feature>
<feature type="strand" evidence="15">
    <location>
        <begin position="270"/>
        <end position="274"/>
    </location>
</feature>
<feature type="helix" evidence="15">
    <location>
        <begin position="275"/>
        <end position="282"/>
    </location>
</feature>
<feature type="helix" evidence="15">
    <location>
        <begin position="285"/>
        <end position="287"/>
    </location>
</feature>
<feature type="strand" evidence="15">
    <location>
        <begin position="288"/>
        <end position="290"/>
    </location>
</feature>
<accession>P00586</accession>
<accession>Q2KIM8</accession>
<accession>Q5E9C5</accession>
<comment type="function">
    <text evidence="1">Together with MRPL18, acts as a mitochondrial import factor for the cytosolic 5S rRNA. Only the nascent unfolded cytoplasmic form is able to bind to the 5S rRNA (By similarity). Formation of iron-sulfur complexes and cyanide detoxification. Binds molecular oxygen and sulfur.</text>
</comment>
<comment type="catalytic activity">
    <reaction evidence="9">
        <text>thiosulfate + hydrogen cyanide = thiocyanate + sulfite + 2 H(+)</text>
        <dbReference type="Rhea" id="RHEA:16881"/>
        <dbReference type="ChEBI" id="CHEBI:15378"/>
        <dbReference type="ChEBI" id="CHEBI:17359"/>
        <dbReference type="ChEBI" id="CHEBI:18022"/>
        <dbReference type="ChEBI" id="CHEBI:18407"/>
        <dbReference type="ChEBI" id="CHEBI:33542"/>
        <dbReference type="EC" id="2.8.1.1"/>
    </reaction>
</comment>
<comment type="subunit">
    <text>Monomer.</text>
</comment>
<comment type="interaction">
    <interactant intactId="EBI-7900146">
        <id>P00586</id>
    </interactant>
    <interactant intactId="EBI-543750">
        <id>P0A6F5</id>
        <label>groEL</label>
    </interactant>
    <organismsDiffer>true</organismsDiffer>
    <experiments>2</experiments>
</comment>
<comment type="subcellular location">
    <subcellularLocation>
        <location>Mitochondrion matrix</location>
    </subcellularLocation>
</comment>
<comment type="tissue specificity">
    <text>Expressed in numerous tissues.</text>
</comment>
<comment type="domain">
    <text evidence="7">Contains two rhodanese domains with different primary structures but with near identical secondary structure conformations suggesting a common evolutionary origin. Only the C-terminal rhodanese domain contains the catalytic cysteine residue (PubMed:691057).</text>
</comment>
<evidence type="ECO:0000250" key="1"/>
<evidence type="ECO:0000250" key="2">
    <source>
        <dbReference type="UniProtKB" id="P24329"/>
    </source>
</evidence>
<evidence type="ECO:0000250" key="3">
    <source>
        <dbReference type="UniProtKB" id="P52196"/>
    </source>
</evidence>
<evidence type="ECO:0000250" key="4">
    <source>
        <dbReference type="UniProtKB" id="Q16762"/>
    </source>
</evidence>
<evidence type="ECO:0000255" key="5">
    <source>
        <dbReference type="PROSITE-ProRule" id="PRU00173"/>
    </source>
</evidence>
<evidence type="ECO:0000269" key="6">
    <source>
    </source>
</evidence>
<evidence type="ECO:0000269" key="7">
    <source>
    </source>
</evidence>
<evidence type="ECO:0000269" key="8">
    <source>
    </source>
</evidence>
<evidence type="ECO:0000269" key="9">
    <source>
    </source>
</evidence>
<evidence type="ECO:0000269" key="10">
    <source>
    </source>
</evidence>
<evidence type="ECO:0000305" key="11"/>
<evidence type="ECO:0007829" key="12">
    <source>
        <dbReference type="PDB" id="1BOH"/>
    </source>
</evidence>
<evidence type="ECO:0007829" key="13">
    <source>
        <dbReference type="PDB" id="1ORB"/>
    </source>
</evidence>
<evidence type="ECO:0007829" key="14">
    <source>
        <dbReference type="PDB" id="1RHD"/>
    </source>
</evidence>
<evidence type="ECO:0007829" key="15">
    <source>
        <dbReference type="PDB" id="1RHS"/>
    </source>
</evidence>
<evidence type="ECO:0007829" key="16">
    <source>
        <dbReference type="PDB" id="8Q5Z"/>
    </source>
</evidence>
<organism>
    <name type="scientific">Bos taurus</name>
    <name type="common">Bovine</name>
    <dbReference type="NCBI Taxonomy" id="9913"/>
    <lineage>
        <taxon>Eukaryota</taxon>
        <taxon>Metazoa</taxon>
        <taxon>Chordata</taxon>
        <taxon>Craniata</taxon>
        <taxon>Vertebrata</taxon>
        <taxon>Euteleostomi</taxon>
        <taxon>Mammalia</taxon>
        <taxon>Eutheria</taxon>
        <taxon>Laurasiatheria</taxon>
        <taxon>Artiodactyla</taxon>
        <taxon>Ruminantia</taxon>
        <taxon>Pecora</taxon>
        <taxon>Bovidae</taxon>
        <taxon>Bovinae</taxon>
        <taxon>Bos</taxon>
    </lineage>
</organism>
<proteinExistence type="evidence at protein level"/>